<comment type="subcellular location">
    <subcellularLocation>
        <location evidence="1">Cell membrane</location>
        <topology evidence="1">Multi-pass membrane protein</topology>
    </subcellularLocation>
</comment>
<comment type="similarity">
    <text evidence="1">Belongs to the UPF0182 family.</text>
</comment>
<keyword id="KW-1003">Cell membrane</keyword>
<keyword id="KW-0472">Membrane</keyword>
<keyword id="KW-0812">Transmembrane</keyword>
<keyword id="KW-1133">Transmembrane helix</keyword>
<proteinExistence type="inferred from homology"/>
<protein>
    <recommendedName>
        <fullName evidence="1">UPF0182 protein ROP_64500</fullName>
    </recommendedName>
</protein>
<accession>C1B1K2</accession>
<name>Y6450_RHOOB</name>
<gene>
    <name type="ordered locus">ROP_64500</name>
</gene>
<feature type="chain" id="PRO_1000185785" description="UPF0182 protein ROP_64500">
    <location>
        <begin position="1"/>
        <end position="993"/>
    </location>
</feature>
<feature type="transmembrane region" description="Helical" evidence="1">
    <location>
        <begin position="18"/>
        <end position="38"/>
    </location>
</feature>
<feature type="transmembrane region" description="Helical" evidence="1">
    <location>
        <begin position="63"/>
        <end position="83"/>
    </location>
</feature>
<feature type="transmembrane region" description="Helical" evidence="1">
    <location>
        <begin position="114"/>
        <end position="134"/>
    </location>
</feature>
<feature type="transmembrane region" description="Helical" evidence="1">
    <location>
        <begin position="174"/>
        <end position="194"/>
    </location>
</feature>
<feature type="transmembrane region" description="Helical" evidence="1">
    <location>
        <begin position="211"/>
        <end position="231"/>
    </location>
</feature>
<feature type="transmembrane region" description="Helical" evidence="1">
    <location>
        <begin position="260"/>
        <end position="280"/>
    </location>
</feature>
<feature type="transmembrane region" description="Helical" evidence="1">
    <location>
        <begin position="288"/>
        <end position="308"/>
    </location>
</feature>
<feature type="region of interest" description="Disordered" evidence="2">
    <location>
        <begin position="904"/>
        <end position="948"/>
    </location>
</feature>
<feature type="compositionally biased region" description="Low complexity" evidence="2">
    <location>
        <begin position="908"/>
        <end position="926"/>
    </location>
</feature>
<feature type="compositionally biased region" description="Pro residues" evidence="2">
    <location>
        <begin position="933"/>
        <end position="942"/>
    </location>
</feature>
<organism>
    <name type="scientific">Rhodococcus opacus (strain B4)</name>
    <dbReference type="NCBI Taxonomy" id="632772"/>
    <lineage>
        <taxon>Bacteria</taxon>
        <taxon>Bacillati</taxon>
        <taxon>Actinomycetota</taxon>
        <taxon>Actinomycetes</taxon>
        <taxon>Mycobacteriales</taxon>
        <taxon>Nocardiaceae</taxon>
        <taxon>Rhodococcus</taxon>
    </lineage>
</organism>
<dbReference type="EMBL" id="AP011115">
    <property type="protein sequence ID" value="BAH54697.1"/>
    <property type="molecule type" value="Genomic_DNA"/>
</dbReference>
<dbReference type="RefSeq" id="WP_015890150.1">
    <property type="nucleotide sequence ID" value="NC_012522.1"/>
</dbReference>
<dbReference type="SMR" id="C1B1K2"/>
<dbReference type="STRING" id="632772.ROP_64500"/>
<dbReference type="KEGG" id="rop:ROP_64500"/>
<dbReference type="PATRIC" id="fig|632772.20.peg.6733"/>
<dbReference type="HOGENOM" id="CLU_007733_1_0_11"/>
<dbReference type="OrthoDB" id="9763654at2"/>
<dbReference type="Proteomes" id="UP000002212">
    <property type="component" value="Chromosome"/>
</dbReference>
<dbReference type="GO" id="GO:0005576">
    <property type="term" value="C:extracellular region"/>
    <property type="evidence" value="ECO:0007669"/>
    <property type="project" value="TreeGrafter"/>
</dbReference>
<dbReference type="GO" id="GO:0005886">
    <property type="term" value="C:plasma membrane"/>
    <property type="evidence" value="ECO:0007669"/>
    <property type="project" value="UniProtKB-SubCell"/>
</dbReference>
<dbReference type="HAMAP" id="MF_01600">
    <property type="entry name" value="UPF0182"/>
    <property type="match status" value="1"/>
</dbReference>
<dbReference type="InterPro" id="IPR005372">
    <property type="entry name" value="UPF0182"/>
</dbReference>
<dbReference type="NCBIfam" id="NF000825">
    <property type="entry name" value="PRK00068.1"/>
    <property type="match status" value="1"/>
</dbReference>
<dbReference type="NCBIfam" id="NF009097">
    <property type="entry name" value="PRK12438.1"/>
    <property type="match status" value="1"/>
</dbReference>
<dbReference type="PANTHER" id="PTHR39344">
    <property type="entry name" value="UPF0182 PROTEIN SLL1060"/>
    <property type="match status" value="1"/>
</dbReference>
<dbReference type="PANTHER" id="PTHR39344:SF1">
    <property type="entry name" value="UPF0182 PROTEIN SLL1060"/>
    <property type="match status" value="1"/>
</dbReference>
<dbReference type="Pfam" id="PF03699">
    <property type="entry name" value="UPF0182"/>
    <property type="match status" value="1"/>
</dbReference>
<sequence length="993" mass="107769">MGMRPPAGLPSLSKRSRVLLVLALVVAALLLVGPRLISTYTDWLWFGEVGFRGVFTTVLVTRLLLFLVVGVVVGGIVWLALLLAYRSRPVFVPVSGPNDPVARYRTTVMTRLRLFGLAIPIAVGLLAGLIAQSSWVTVQLFVNGGSFGVADPEFGLDVGFYTFDLPFYRFVLNWLFVAVLLAFFASLVTHYIFGGLKLAGRGGALTNAARVQLAVLAGTFILLKAVAYWFDRYSLLSSSRKEPTFTGGSYTDMNAVLQAKLILLAIAVICAGAFFAAIFLRDLRIPAMATALLVLSSILVGAVWPLVVEQFSVRPNAADKESAYIERNIAATRQAYGITDDKVEYQDYQGYGTTPPRDVPADVTTIANTRLLDPNILSRTFTQQQQLKNFYGFPPTLDIDRYDIDGEMRDYIVAARELSSKSLTGNQTDWINKHTVYTHGNGLVAAPANRVNAAAGESAEEAANSNSGYPVYMVSDIASQAAGDQVIPVEQPRIYYGEVIADTDADYAIVGGSEGSDPREYDTDTSRYTYTGSGGVPIGNWFNRLAFAAKYTERNILFSGAIGSDSKIIYNRDPRDRVTHVAPWLTADGDSYPAVVDGKVVWIVDAYTTLQDYPYAQRSSLDGLVEDSIDQNTGRLLPRKEVSYIRNSVKATVDAYDGTVKLYQVDQNDPVLDAWMGVFPDAVQPADSIPDELRAHFRYPEDLFKVQREMLAKYHVDDPKEFFTNNAFWSVPSDPTIDTSANQPPYYVLVGDPETGKPSFNLTSAMVGYSREFLSAYLSVKSDPENYGKFTVLQLPTDTQTQGPQQTQNSMISDPRVASERTLLERSNKIQYGNLLTLPIANGGILYVEPMYTERSSTGPNTSTFPQLSRVLVSYREPPPSNSVRVGYAPTLAQALDQVFGAGTGSVATAPSAEEGTPPETGTTPPVEQGAAPPAPTAPATPPSGTDVSAAVAELDASLDALTAAQRSGDFAAYGAALARVQKAVAAYEAIPK</sequence>
<reference key="1">
    <citation type="submission" date="2009-03" db="EMBL/GenBank/DDBJ databases">
        <title>Comparison of the complete genome sequences of Rhodococcus erythropolis PR4 and Rhodococcus opacus B4.</title>
        <authorList>
            <person name="Takarada H."/>
            <person name="Sekine M."/>
            <person name="Hosoyama A."/>
            <person name="Yamada R."/>
            <person name="Fujisawa T."/>
            <person name="Omata S."/>
            <person name="Shimizu A."/>
            <person name="Tsukatani N."/>
            <person name="Tanikawa S."/>
            <person name="Fujita N."/>
            <person name="Harayama S."/>
        </authorList>
    </citation>
    <scope>NUCLEOTIDE SEQUENCE [LARGE SCALE GENOMIC DNA]</scope>
    <source>
        <strain>B4</strain>
    </source>
</reference>
<evidence type="ECO:0000255" key="1">
    <source>
        <dbReference type="HAMAP-Rule" id="MF_01600"/>
    </source>
</evidence>
<evidence type="ECO:0000256" key="2">
    <source>
        <dbReference type="SAM" id="MobiDB-lite"/>
    </source>
</evidence>